<proteinExistence type="inferred from homology"/>
<accession>Q6GDB9</accession>
<feature type="chain" id="PRO_0000260807" description="UPF0397 protein SAR2767">
    <location>
        <begin position="1"/>
        <end position="184"/>
    </location>
</feature>
<feature type="transmembrane region" description="Helical" evidence="1">
    <location>
        <begin position="11"/>
        <end position="31"/>
    </location>
</feature>
<feature type="transmembrane region" description="Helical" evidence="1">
    <location>
        <begin position="44"/>
        <end position="64"/>
    </location>
</feature>
<feature type="transmembrane region" description="Helical" evidence="1">
    <location>
        <begin position="77"/>
        <end position="97"/>
    </location>
</feature>
<feature type="transmembrane region" description="Helical" evidence="1">
    <location>
        <begin position="117"/>
        <end position="137"/>
    </location>
</feature>
<feature type="transmembrane region" description="Helical" evidence="1">
    <location>
        <begin position="148"/>
        <end position="168"/>
    </location>
</feature>
<dbReference type="EMBL" id="BX571856">
    <property type="protein sequence ID" value="CAG41742.1"/>
    <property type="molecule type" value="Genomic_DNA"/>
</dbReference>
<dbReference type="RefSeq" id="WP_000743709.1">
    <property type="nucleotide sequence ID" value="NC_002952.2"/>
</dbReference>
<dbReference type="KEGG" id="sar:SAR2767"/>
<dbReference type="HOGENOM" id="CLU_120023_0_0_9"/>
<dbReference type="Proteomes" id="UP000000596">
    <property type="component" value="Chromosome"/>
</dbReference>
<dbReference type="GO" id="GO:0005886">
    <property type="term" value="C:plasma membrane"/>
    <property type="evidence" value="ECO:0007669"/>
    <property type="project" value="UniProtKB-SubCell"/>
</dbReference>
<dbReference type="Gene3D" id="1.10.1760.20">
    <property type="match status" value="1"/>
</dbReference>
<dbReference type="HAMAP" id="MF_01572">
    <property type="entry name" value="UPF0397"/>
    <property type="match status" value="1"/>
</dbReference>
<dbReference type="InterPro" id="IPR009825">
    <property type="entry name" value="ECF_substrate-spec-like"/>
</dbReference>
<dbReference type="InterPro" id="IPR022914">
    <property type="entry name" value="UPF0397"/>
</dbReference>
<dbReference type="NCBIfam" id="NF010182">
    <property type="entry name" value="PRK13661.1"/>
    <property type="match status" value="1"/>
</dbReference>
<dbReference type="PANTHER" id="PTHR37815">
    <property type="entry name" value="UPF0397 PROTEIN BC_2624-RELATED"/>
    <property type="match status" value="1"/>
</dbReference>
<dbReference type="PANTHER" id="PTHR37815:SF3">
    <property type="entry name" value="UPF0397 PROTEIN SPR0429"/>
    <property type="match status" value="1"/>
</dbReference>
<dbReference type="Pfam" id="PF07155">
    <property type="entry name" value="ECF-ribofla_trS"/>
    <property type="match status" value="1"/>
</dbReference>
<sequence>MKKQDISVKTVVAIGIGAAVFVILGRFVVIPTGFPNTNIETSYAFLALISAIFGPFAGLMTGLIGHAIKDFTTYGSAWWSWVICSGIIGCLYGWIGLKLNLSSGRFSRKSMIYFNTGQIIANIICWALIAPTLDILIYNEPANKVYTQGVISAVLNIISVGIIGTILLKAYASSQIKKGSLRKE</sequence>
<keyword id="KW-1003">Cell membrane</keyword>
<keyword id="KW-0472">Membrane</keyword>
<keyword id="KW-0812">Transmembrane</keyword>
<keyword id="KW-1133">Transmembrane helix</keyword>
<evidence type="ECO:0000255" key="1">
    <source>
        <dbReference type="HAMAP-Rule" id="MF_01572"/>
    </source>
</evidence>
<comment type="subcellular location">
    <subcellularLocation>
        <location evidence="1">Cell membrane</location>
        <topology evidence="1">Multi-pass membrane protein</topology>
    </subcellularLocation>
</comment>
<comment type="similarity">
    <text evidence="1">Belongs to the UPF0397 family.</text>
</comment>
<protein>
    <recommendedName>
        <fullName evidence="1">UPF0397 protein SAR2767</fullName>
    </recommendedName>
</protein>
<name>Y2767_STAAR</name>
<gene>
    <name type="ordered locus">SAR2767</name>
</gene>
<organism>
    <name type="scientific">Staphylococcus aureus (strain MRSA252)</name>
    <dbReference type="NCBI Taxonomy" id="282458"/>
    <lineage>
        <taxon>Bacteria</taxon>
        <taxon>Bacillati</taxon>
        <taxon>Bacillota</taxon>
        <taxon>Bacilli</taxon>
        <taxon>Bacillales</taxon>
        <taxon>Staphylococcaceae</taxon>
        <taxon>Staphylococcus</taxon>
    </lineage>
</organism>
<reference key="1">
    <citation type="journal article" date="2004" name="Proc. Natl. Acad. Sci. U.S.A.">
        <title>Complete genomes of two clinical Staphylococcus aureus strains: evidence for the rapid evolution of virulence and drug resistance.</title>
        <authorList>
            <person name="Holden M.T.G."/>
            <person name="Feil E.J."/>
            <person name="Lindsay J.A."/>
            <person name="Peacock S.J."/>
            <person name="Day N.P.J."/>
            <person name="Enright M.C."/>
            <person name="Foster T.J."/>
            <person name="Moore C.E."/>
            <person name="Hurst L."/>
            <person name="Atkin R."/>
            <person name="Barron A."/>
            <person name="Bason N."/>
            <person name="Bentley S.D."/>
            <person name="Chillingworth C."/>
            <person name="Chillingworth T."/>
            <person name="Churcher C."/>
            <person name="Clark L."/>
            <person name="Corton C."/>
            <person name="Cronin A."/>
            <person name="Doggett J."/>
            <person name="Dowd L."/>
            <person name="Feltwell T."/>
            <person name="Hance Z."/>
            <person name="Harris B."/>
            <person name="Hauser H."/>
            <person name="Holroyd S."/>
            <person name="Jagels K."/>
            <person name="James K.D."/>
            <person name="Lennard N."/>
            <person name="Line A."/>
            <person name="Mayes R."/>
            <person name="Moule S."/>
            <person name="Mungall K."/>
            <person name="Ormond D."/>
            <person name="Quail M.A."/>
            <person name="Rabbinowitsch E."/>
            <person name="Rutherford K.M."/>
            <person name="Sanders M."/>
            <person name="Sharp S."/>
            <person name="Simmonds M."/>
            <person name="Stevens K."/>
            <person name="Whitehead S."/>
            <person name="Barrell B.G."/>
            <person name="Spratt B.G."/>
            <person name="Parkhill J."/>
        </authorList>
    </citation>
    <scope>NUCLEOTIDE SEQUENCE [LARGE SCALE GENOMIC DNA]</scope>
    <source>
        <strain>MRSA252</strain>
    </source>
</reference>